<dbReference type="EMBL" id="AC004793">
    <property type="protein sequence ID" value="AAD21700.1"/>
    <property type="molecule type" value="Genomic_DNA"/>
</dbReference>
<dbReference type="EMBL" id="CP002684">
    <property type="protein sequence ID" value="AEE31312.1"/>
    <property type="molecule type" value="Genomic_DNA"/>
</dbReference>
<dbReference type="EMBL" id="DQ056470">
    <property type="protein sequence ID" value="AAY78627.1"/>
    <property type="molecule type" value="mRNA"/>
</dbReference>
<dbReference type="PIR" id="D86436">
    <property type="entry name" value="D86436"/>
</dbReference>
<dbReference type="RefSeq" id="NP_174394.1">
    <property type="nucleotide sequence ID" value="NM_102847.1"/>
</dbReference>
<dbReference type="SMR" id="Q9SA02"/>
<dbReference type="BioGRID" id="25229">
    <property type="interactions" value="1"/>
</dbReference>
<dbReference type="FunCoup" id="Q9SA02">
    <property type="interactions" value="3"/>
</dbReference>
<dbReference type="STRING" id="3702.Q9SA02"/>
<dbReference type="PaxDb" id="3702-AT1G31080.1"/>
<dbReference type="EnsemblPlants" id="AT1G31080.1">
    <property type="protein sequence ID" value="AT1G31080.1"/>
    <property type="gene ID" value="AT1G31080"/>
</dbReference>
<dbReference type="GeneID" id="839994"/>
<dbReference type="Gramene" id="AT1G31080.1">
    <property type="protein sequence ID" value="AT1G31080.1"/>
    <property type="gene ID" value="AT1G31080"/>
</dbReference>
<dbReference type="KEGG" id="ath:AT1G31080"/>
<dbReference type="Araport" id="AT1G31080"/>
<dbReference type="TAIR" id="AT1G31080"/>
<dbReference type="eggNOG" id="ENOG502SNHU">
    <property type="taxonomic scope" value="Eukaryota"/>
</dbReference>
<dbReference type="HOGENOM" id="CLU_027176_8_1_1"/>
<dbReference type="InParanoid" id="Q9SA02"/>
<dbReference type="OMA" id="CFHIRSE"/>
<dbReference type="PhylomeDB" id="Q9SA02"/>
<dbReference type="PRO" id="PR:Q9SA02"/>
<dbReference type="Proteomes" id="UP000006548">
    <property type="component" value="Chromosome 1"/>
</dbReference>
<dbReference type="ExpressionAtlas" id="Q9SA02">
    <property type="expression patterns" value="baseline and differential"/>
</dbReference>
<dbReference type="Gene3D" id="1.20.1280.50">
    <property type="match status" value="1"/>
</dbReference>
<dbReference type="InterPro" id="IPR013187">
    <property type="entry name" value="F-box-assoc_dom_typ3"/>
</dbReference>
<dbReference type="InterPro" id="IPR017451">
    <property type="entry name" value="F-box-assoc_interact_dom"/>
</dbReference>
<dbReference type="InterPro" id="IPR036047">
    <property type="entry name" value="F-box-like_dom_sf"/>
</dbReference>
<dbReference type="InterPro" id="IPR001810">
    <property type="entry name" value="F-box_dom"/>
</dbReference>
<dbReference type="NCBIfam" id="TIGR01640">
    <property type="entry name" value="F_box_assoc_1"/>
    <property type="match status" value="1"/>
</dbReference>
<dbReference type="PANTHER" id="PTHR31111">
    <property type="entry name" value="BNAA05G37150D PROTEIN-RELATED"/>
    <property type="match status" value="1"/>
</dbReference>
<dbReference type="PANTHER" id="PTHR31111:SF130">
    <property type="entry name" value="F-BOX ASSOCIATED UBIQUITINATION EFFECTOR FAMILY PROTEIN"/>
    <property type="match status" value="1"/>
</dbReference>
<dbReference type="Pfam" id="PF00646">
    <property type="entry name" value="F-box"/>
    <property type="match status" value="1"/>
</dbReference>
<dbReference type="Pfam" id="PF08268">
    <property type="entry name" value="FBA_3"/>
    <property type="match status" value="1"/>
</dbReference>
<dbReference type="SMART" id="SM00256">
    <property type="entry name" value="FBOX"/>
    <property type="match status" value="1"/>
</dbReference>
<dbReference type="SUPFAM" id="SSF81383">
    <property type="entry name" value="F-box domain"/>
    <property type="match status" value="1"/>
</dbReference>
<feature type="chain" id="PRO_0000283302" description="F-box protein At1g31080">
    <location>
        <begin position="1"/>
        <end position="355"/>
    </location>
</feature>
<feature type="domain" description="F-box">
    <location>
        <begin position="4"/>
        <end position="49"/>
    </location>
</feature>
<feature type="region of interest" description="Disordered" evidence="1">
    <location>
        <begin position="306"/>
        <end position="333"/>
    </location>
</feature>
<feature type="compositionally biased region" description="Polar residues" evidence="1">
    <location>
        <begin position="306"/>
        <end position="320"/>
    </location>
</feature>
<feature type="compositionally biased region" description="Basic and acidic residues" evidence="1">
    <location>
        <begin position="321"/>
        <end position="333"/>
    </location>
</feature>
<reference key="1">
    <citation type="journal article" date="2000" name="Nature">
        <title>Sequence and analysis of chromosome 1 of the plant Arabidopsis thaliana.</title>
        <authorList>
            <person name="Theologis A."/>
            <person name="Ecker J.R."/>
            <person name="Palm C.J."/>
            <person name="Federspiel N.A."/>
            <person name="Kaul S."/>
            <person name="White O."/>
            <person name="Alonso J."/>
            <person name="Altafi H."/>
            <person name="Araujo R."/>
            <person name="Bowman C.L."/>
            <person name="Brooks S.Y."/>
            <person name="Buehler E."/>
            <person name="Chan A."/>
            <person name="Chao Q."/>
            <person name="Chen H."/>
            <person name="Cheuk R.F."/>
            <person name="Chin C.W."/>
            <person name="Chung M.K."/>
            <person name="Conn L."/>
            <person name="Conway A.B."/>
            <person name="Conway A.R."/>
            <person name="Creasy T.H."/>
            <person name="Dewar K."/>
            <person name="Dunn P."/>
            <person name="Etgu P."/>
            <person name="Feldblyum T.V."/>
            <person name="Feng J.-D."/>
            <person name="Fong B."/>
            <person name="Fujii C.Y."/>
            <person name="Gill J.E."/>
            <person name="Goldsmith A.D."/>
            <person name="Haas B."/>
            <person name="Hansen N.F."/>
            <person name="Hughes B."/>
            <person name="Huizar L."/>
            <person name="Hunter J.L."/>
            <person name="Jenkins J."/>
            <person name="Johnson-Hopson C."/>
            <person name="Khan S."/>
            <person name="Khaykin E."/>
            <person name="Kim C.J."/>
            <person name="Koo H.L."/>
            <person name="Kremenetskaia I."/>
            <person name="Kurtz D.B."/>
            <person name="Kwan A."/>
            <person name="Lam B."/>
            <person name="Langin-Hooper S."/>
            <person name="Lee A."/>
            <person name="Lee J.M."/>
            <person name="Lenz C.A."/>
            <person name="Li J.H."/>
            <person name="Li Y.-P."/>
            <person name="Lin X."/>
            <person name="Liu S.X."/>
            <person name="Liu Z.A."/>
            <person name="Luros J.S."/>
            <person name="Maiti R."/>
            <person name="Marziali A."/>
            <person name="Militscher J."/>
            <person name="Miranda M."/>
            <person name="Nguyen M."/>
            <person name="Nierman W.C."/>
            <person name="Osborne B.I."/>
            <person name="Pai G."/>
            <person name="Peterson J."/>
            <person name="Pham P.K."/>
            <person name="Rizzo M."/>
            <person name="Rooney T."/>
            <person name="Rowley D."/>
            <person name="Sakano H."/>
            <person name="Salzberg S.L."/>
            <person name="Schwartz J.R."/>
            <person name="Shinn P."/>
            <person name="Southwick A.M."/>
            <person name="Sun H."/>
            <person name="Tallon L.J."/>
            <person name="Tambunga G."/>
            <person name="Toriumi M.J."/>
            <person name="Town C.D."/>
            <person name="Utterback T."/>
            <person name="Van Aken S."/>
            <person name="Vaysberg M."/>
            <person name="Vysotskaia V.S."/>
            <person name="Walker M."/>
            <person name="Wu D."/>
            <person name="Yu G."/>
            <person name="Fraser C.M."/>
            <person name="Venter J.C."/>
            <person name="Davis R.W."/>
        </authorList>
    </citation>
    <scope>NUCLEOTIDE SEQUENCE [LARGE SCALE GENOMIC DNA]</scope>
    <source>
        <strain>cv. Columbia</strain>
    </source>
</reference>
<reference key="2">
    <citation type="journal article" date="2017" name="Plant J.">
        <title>Araport11: a complete reannotation of the Arabidopsis thaliana reference genome.</title>
        <authorList>
            <person name="Cheng C.Y."/>
            <person name="Krishnakumar V."/>
            <person name="Chan A.P."/>
            <person name="Thibaud-Nissen F."/>
            <person name="Schobel S."/>
            <person name="Town C.D."/>
        </authorList>
    </citation>
    <scope>GENOME REANNOTATION</scope>
    <source>
        <strain>cv. Columbia</strain>
    </source>
</reference>
<reference key="3">
    <citation type="submission" date="2005-05" db="EMBL/GenBank/DDBJ databases">
        <authorList>
            <person name="Underwood B.A."/>
            <person name="Xiao Y.-L."/>
            <person name="Moskal W.A. Jr."/>
            <person name="Monaghan E.L."/>
            <person name="Wang W."/>
            <person name="Redman J.C."/>
            <person name="Wu H.C."/>
            <person name="Utterback T."/>
            <person name="Town C.D."/>
        </authorList>
    </citation>
    <scope>NUCLEOTIDE SEQUENCE [LARGE SCALE MRNA]</scope>
    <source>
        <strain>cv. Columbia</strain>
    </source>
</reference>
<keyword id="KW-1185">Reference proteome</keyword>
<gene>
    <name type="ordered locus">At1g31080</name>
    <name type="ORF">F28K20.2</name>
</gene>
<evidence type="ECO:0000256" key="1">
    <source>
        <dbReference type="SAM" id="MobiDB-lite"/>
    </source>
</evidence>
<proteinExistence type="evidence at transcript level"/>
<sequence length="355" mass="41428">MNRGANSASIPNDLILEILSRLPAKSTGRFRCVSKLWGSMLCHSYFTELFLTRSSARPRLLIGIHQDGDRFFFSCPQPQSPYDNSSIVLAADFHMKFGRVEDEWVYHILTLGTENVRWREIICPFSYDPPREKPICINGVLYYISVGSYYSLIGCFDVRSEKFKFLYLSPDCFPNWSRKLINYKGKLGVTIMEDYHGGFPLKLRMWVLEDVEKEEWTRYAYTLRPENKVEDNDYVYVVGATASGEIVLTKQNAYKPFYVFYFSPERNTLLSVEIQGVGEEWFYHNVYYFVDHVEDLRFDVMKTTYAGTSRSPPKQSTSTSSREDHEVRTLAHQKEDRLTFESVNQFDALRLLEDD</sequence>
<organism>
    <name type="scientific">Arabidopsis thaliana</name>
    <name type="common">Mouse-ear cress</name>
    <dbReference type="NCBI Taxonomy" id="3702"/>
    <lineage>
        <taxon>Eukaryota</taxon>
        <taxon>Viridiplantae</taxon>
        <taxon>Streptophyta</taxon>
        <taxon>Embryophyta</taxon>
        <taxon>Tracheophyta</taxon>
        <taxon>Spermatophyta</taxon>
        <taxon>Magnoliopsida</taxon>
        <taxon>eudicotyledons</taxon>
        <taxon>Gunneridae</taxon>
        <taxon>Pentapetalae</taxon>
        <taxon>rosids</taxon>
        <taxon>malvids</taxon>
        <taxon>Brassicales</taxon>
        <taxon>Brassicaceae</taxon>
        <taxon>Camelineae</taxon>
        <taxon>Arabidopsis</taxon>
    </lineage>
</organism>
<accession>Q9SA02</accession>
<protein>
    <recommendedName>
        <fullName>F-box protein At1g31080</fullName>
    </recommendedName>
</protein>
<name>FB26_ARATH</name>